<gene>
    <name evidence="1" type="primary">panD</name>
    <name type="ordered locus">SG0486</name>
</gene>
<protein>
    <recommendedName>
        <fullName evidence="1">Aspartate 1-decarboxylase</fullName>
        <ecNumber evidence="1">4.1.1.11</ecNumber>
    </recommendedName>
    <alternativeName>
        <fullName evidence="1">Aspartate alpha-decarboxylase</fullName>
    </alternativeName>
    <component>
        <recommendedName>
            <fullName evidence="1">Aspartate 1-decarboxylase beta chain</fullName>
        </recommendedName>
    </component>
    <component>
        <recommendedName>
            <fullName evidence="1">Aspartate 1-decarboxylase alpha chain</fullName>
        </recommendedName>
    </component>
</protein>
<evidence type="ECO:0000255" key="1">
    <source>
        <dbReference type="HAMAP-Rule" id="MF_00446"/>
    </source>
</evidence>
<name>PAND_SODGM</name>
<sequence length="126" mass="14089">MQRTMLRGKLHRVHVTQVDLHYEGSCAIDQDFLDAAGILEYEAIDIYNVDNGQRFSTYAIAAERGSRIISVNGAAARCACVGDLLIICAYVQMPDEEARHHAPRVAYFDQHNQLQRTAKALPVQMA</sequence>
<comment type="function">
    <text evidence="1">Catalyzes the pyruvoyl-dependent decarboxylation of aspartate to produce beta-alanine.</text>
</comment>
<comment type="catalytic activity">
    <reaction evidence="1">
        <text>L-aspartate + H(+) = beta-alanine + CO2</text>
        <dbReference type="Rhea" id="RHEA:19497"/>
        <dbReference type="ChEBI" id="CHEBI:15378"/>
        <dbReference type="ChEBI" id="CHEBI:16526"/>
        <dbReference type="ChEBI" id="CHEBI:29991"/>
        <dbReference type="ChEBI" id="CHEBI:57966"/>
        <dbReference type="EC" id="4.1.1.11"/>
    </reaction>
</comment>
<comment type="cofactor">
    <cofactor evidence="1">
        <name>pyruvate</name>
        <dbReference type="ChEBI" id="CHEBI:15361"/>
    </cofactor>
    <text evidence="1">Binds 1 pyruvoyl group covalently per subunit.</text>
</comment>
<comment type="pathway">
    <text evidence="1">Cofactor biosynthesis; (R)-pantothenate biosynthesis; beta-alanine from L-aspartate: step 1/1.</text>
</comment>
<comment type="subunit">
    <text evidence="1">Heterooctamer of four alpha and four beta subunits.</text>
</comment>
<comment type="subcellular location">
    <subcellularLocation>
        <location evidence="1">Cytoplasm</location>
    </subcellularLocation>
</comment>
<comment type="PTM">
    <text evidence="1">Is synthesized initially as an inactive proenzyme, which is activated by self-cleavage at a specific serine bond to produce a beta-subunit with a hydroxyl group at its C-terminus and an alpha-subunit with a pyruvoyl group at its N-terminus.</text>
</comment>
<comment type="similarity">
    <text evidence="1">Belongs to the PanD family.</text>
</comment>
<dbReference type="EC" id="4.1.1.11" evidence="1"/>
<dbReference type="EMBL" id="AP008232">
    <property type="protein sequence ID" value="BAE73761.1"/>
    <property type="molecule type" value="Genomic_DNA"/>
</dbReference>
<dbReference type="RefSeq" id="WP_011410459.1">
    <property type="nucleotide sequence ID" value="NC_007712.1"/>
</dbReference>
<dbReference type="SMR" id="Q2NVR4"/>
<dbReference type="STRING" id="343509.SG0486"/>
<dbReference type="KEGG" id="sgl:SG0486"/>
<dbReference type="eggNOG" id="COG0853">
    <property type="taxonomic scope" value="Bacteria"/>
</dbReference>
<dbReference type="HOGENOM" id="CLU_115305_2_1_6"/>
<dbReference type="OrthoDB" id="9803983at2"/>
<dbReference type="BioCyc" id="SGLO343509:SGP1_RS04345-MONOMER"/>
<dbReference type="UniPathway" id="UPA00028">
    <property type="reaction ID" value="UER00002"/>
</dbReference>
<dbReference type="Proteomes" id="UP000001932">
    <property type="component" value="Chromosome"/>
</dbReference>
<dbReference type="GO" id="GO:0005829">
    <property type="term" value="C:cytosol"/>
    <property type="evidence" value="ECO:0007669"/>
    <property type="project" value="TreeGrafter"/>
</dbReference>
<dbReference type="GO" id="GO:0004068">
    <property type="term" value="F:aspartate 1-decarboxylase activity"/>
    <property type="evidence" value="ECO:0007669"/>
    <property type="project" value="UniProtKB-UniRule"/>
</dbReference>
<dbReference type="GO" id="GO:0006523">
    <property type="term" value="P:alanine biosynthetic process"/>
    <property type="evidence" value="ECO:0007669"/>
    <property type="project" value="InterPro"/>
</dbReference>
<dbReference type="GO" id="GO:0015940">
    <property type="term" value="P:pantothenate biosynthetic process"/>
    <property type="evidence" value="ECO:0007669"/>
    <property type="project" value="UniProtKB-UniRule"/>
</dbReference>
<dbReference type="CDD" id="cd06919">
    <property type="entry name" value="Asp_decarbox"/>
    <property type="match status" value="1"/>
</dbReference>
<dbReference type="FunFam" id="2.40.40.20:FF:000004">
    <property type="entry name" value="Aspartate 1-decarboxylase"/>
    <property type="match status" value="1"/>
</dbReference>
<dbReference type="Gene3D" id="2.40.40.20">
    <property type="match status" value="1"/>
</dbReference>
<dbReference type="HAMAP" id="MF_00446">
    <property type="entry name" value="PanD"/>
    <property type="match status" value="1"/>
</dbReference>
<dbReference type="InterPro" id="IPR009010">
    <property type="entry name" value="Asp_de-COase-like_dom_sf"/>
</dbReference>
<dbReference type="InterPro" id="IPR003190">
    <property type="entry name" value="Asp_decarbox"/>
</dbReference>
<dbReference type="NCBIfam" id="TIGR00223">
    <property type="entry name" value="panD"/>
    <property type="match status" value="1"/>
</dbReference>
<dbReference type="PANTHER" id="PTHR21012">
    <property type="entry name" value="ASPARTATE 1-DECARBOXYLASE"/>
    <property type="match status" value="1"/>
</dbReference>
<dbReference type="PANTHER" id="PTHR21012:SF0">
    <property type="entry name" value="ASPARTATE 1-DECARBOXYLASE"/>
    <property type="match status" value="1"/>
</dbReference>
<dbReference type="Pfam" id="PF02261">
    <property type="entry name" value="Asp_decarbox"/>
    <property type="match status" value="1"/>
</dbReference>
<dbReference type="PIRSF" id="PIRSF006246">
    <property type="entry name" value="Asp_decarbox"/>
    <property type="match status" value="1"/>
</dbReference>
<dbReference type="SUPFAM" id="SSF50692">
    <property type="entry name" value="ADC-like"/>
    <property type="match status" value="1"/>
</dbReference>
<feature type="chain" id="PRO_0000236895" description="Aspartate 1-decarboxylase beta chain" evidence="1">
    <location>
        <begin position="1"/>
        <end position="24"/>
    </location>
</feature>
<feature type="chain" id="PRO_0000236896" description="Aspartate 1-decarboxylase alpha chain" evidence="1">
    <location>
        <begin position="25"/>
        <end position="126"/>
    </location>
</feature>
<feature type="active site" description="Schiff-base intermediate with substrate; via pyruvic acid" evidence="1">
    <location>
        <position position="25"/>
    </location>
</feature>
<feature type="active site" description="Proton donor" evidence="1">
    <location>
        <position position="58"/>
    </location>
</feature>
<feature type="binding site" evidence="1">
    <location>
        <position position="57"/>
    </location>
    <ligand>
        <name>substrate</name>
    </ligand>
</feature>
<feature type="binding site" evidence="1">
    <location>
        <begin position="73"/>
        <end position="75"/>
    </location>
    <ligand>
        <name>substrate</name>
    </ligand>
</feature>
<feature type="modified residue" description="Pyruvic acid (Ser)" evidence="1">
    <location>
        <position position="25"/>
    </location>
</feature>
<keyword id="KW-0068">Autocatalytic cleavage</keyword>
<keyword id="KW-0963">Cytoplasm</keyword>
<keyword id="KW-0210">Decarboxylase</keyword>
<keyword id="KW-0456">Lyase</keyword>
<keyword id="KW-0566">Pantothenate biosynthesis</keyword>
<keyword id="KW-0670">Pyruvate</keyword>
<keyword id="KW-0704">Schiff base</keyword>
<keyword id="KW-0865">Zymogen</keyword>
<accession>Q2NVR4</accession>
<proteinExistence type="inferred from homology"/>
<organism>
    <name type="scientific">Sodalis glossinidius (strain morsitans)</name>
    <dbReference type="NCBI Taxonomy" id="343509"/>
    <lineage>
        <taxon>Bacteria</taxon>
        <taxon>Pseudomonadati</taxon>
        <taxon>Pseudomonadota</taxon>
        <taxon>Gammaproteobacteria</taxon>
        <taxon>Enterobacterales</taxon>
        <taxon>Bruguierivoracaceae</taxon>
        <taxon>Sodalis</taxon>
    </lineage>
</organism>
<reference key="1">
    <citation type="journal article" date="2006" name="Genome Res.">
        <title>Massive genome erosion and functional adaptations provide insights into the symbiotic lifestyle of Sodalis glossinidius in the tsetse host.</title>
        <authorList>
            <person name="Toh H."/>
            <person name="Weiss B.L."/>
            <person name="Perkin S.A.H."/>
            <person name="Yamashita A."/>
            <person name="Oshima K."/>
            <person name="Hattori M."/>
            <person name="Aksoy S."/>
        </authorList>
    </citation>
    <scope>NUCLEOTIDE SEQUENCE [LARGE SCALE GENOMIC DNA]</scope>
    <source>
        <strain>morsitans</strain>
    </source>
</reference>